<accession>A9MJE5</accession>
<dbReference type="EC" id="2.3.1.47" evidence="1"/>
<dbReference type="EMBL" id="CP000880">
    <property type="protein sequence ID" value="ABX22008.1"/>
    <property type="molecule type" value="Genomic_DNA"/>
</dbReference>
<dbReference type="SMR" id="A9MJE5"/>
<dbReference type="STRING" id="41514.SARI_02131"/>
<dbReference type="KEGG" id="ses:SARI_02131"/>
<dbReference type="HOGENOM" id="CLU_015846_11_2_6"/>
<dbReference type="UniPathway" id="UPA00078"/>
<dbReference type="Proteomes" id="UP000002084">
    <property type="component" value="Chromosome"/>
</dbReference>
<dbReference type="GO" id="GO:0008710">
    <property type="term" value="F:8-amino-7-oxononanoate synthase activity"/>
    <property type="evidence" value="ECO:0007669"/>
    <property type="project" value="UniProtKB-UniRule"/>
</dbReference>
<dbReference type="GO" id="GO:0030170">
    <property type="term" value="F:pyridoxal phosphate binding"/>
    <property type="evidence" value="ECO:0007669"/>
    <property type="project" value="UniProtKB-UniRule"/>
</dbReference>
<dbReference type="GO" id="GO:0009102">
    <property type="term" value="P:biotin biosynthetic process"/>
    <property type="evidence" value="ECO:0007669"/>
    <property type="project" value="UniProtKB-UniRule"/>
</dbReference>
<dbReference type="CDD" id="cd06454">
    <property type="entry name" value="KBL_like"/>
    <property type="match status" value="1"/>
</dbReference>
<dbReference type="FunFam" id="3.40.640.10:FF:000095">
    <property type="entry name" value="8-amino-7-oxononanoate synthase"/>
    <property type="match status" value="1"/>
</dbReference>
<dbReference type="Gene3D" id="3.90.1150.10">
    <property type="entry name" value="Aspartate Aminotransferase, domain 1"/>
    <property type="match status" value="1"/>
</dbReference>
<dbReference type="Gene3D" id="3.40.640.10">
    <property type="entry name" value="Type I PLP-dependent aspartate aminotransferase-like (Major domain)"/>
    <property type="match status" value="1"/>
</dbReference>
<dbReference type="HAMAP" id="MF_01693">
    <property type="entry name" value="BioF_aminotrans_2"/>
    <property type="match status" value="1"/>
</dbReference>
<dbReference type="InterPro" id="IPR001917">
    <property type="entry name" value="Aminotrans_II_pyridoxalP_BS"/>
</dbReference>
<dbReference type="InterPro" id="IPR004839">
    <property type="entry name" value="Aminotransferase_I/II_large"/>
</dbReference>
<dbReference type="InterPro" id="IPR050087">
    <property type="entry name" value="AON_synthase_class-II"/>
</dbReference>
<dbReference type="InterPro" id="IPR004723">
    <property type="entry name" value="AONS_Archaea/Proteobacteria"/>
</dbReference>
<dbReference type="InterPro" id="IPR022834">
    <property type="entry name" value="AONS_Proteobacteria"/>
</dbReference>
<dbReference type="InterPro" id="IPR015424">
    <property type="entry name" value="PyrdxlP-dep_Trfase"/>
</dbReference>
<dbReference type="InterPro" id="IPR015421">
    <property type="entry name" value="PyrdxlP-dep_Trfase_major"/>
</dbReference>
<dbReference type="InterPro" id="IPR015422">
    <property type="entry name" value="PyrdxlP-dep_Trfase_small"/>
</dbReference>
<dbReference type="NCBIfam" id="TIGR00858">
    <property type="entry name" value="bioF"/>
    <property type="match status" value="1"/>
</dbReference>
<dbReference type="PANTHER" id="PTHR13693:SF100">
    <property type="entry name" value="8-AMINO-7-OXONONANOATE SYNTHASE"/>
    <property type="match status" value="1"/>
</dbReference>
<dbReference type="PANTHER" id="PTHR13693">
    <property type="entry name" value="CLASS II AMINOTRANSFERASE/8-AMINO-7-OXONONANOATE SYNTHASE"/>
    <property type="match status" value="1"/>
</dbReference>
<dbReference type="Pfam" id="PF00155">
    <property type="entry name" value="Aminotran_1_2"/>
    <property type="match status" value="1"/>
</dbReference>
<dbReference type="SUPFAM" id="SSF53383">
    <property type="entry name" value="PLP-dependent transferases"/>
    <property type="match status" value="1"/>
</dbReference>
<dbReference type="PROSITE" id="PS00599">
    <property type="entry name" value="AA_TRANSFER_CLASS_2"/>
    <property type="match status" value="1"/>
</dbReference>
<reference key="1">
    <citation type="submission" date="2007-11" db="EMBL/GenBank/DDBJ databases">
        <authorList>
            <consortium name="The Salmonella enterica serovar Arizonae Genome Sequencing Project"/>
            <person name="McClelland M."/>
            <person name="Sanderson E.K."/>
            <person name="Porwollik S."/>
            <person name="Spieth J."/>
            <person name="Clifton W.S."/>
            <person name="Fulton R."/>
            <person name="Chunyan W."/>
            <person name="Wollam A."/>
            <person name="Shah N."/>
            <person name="Pepin K."/>
            <person name="Bhonagiri V."/>
            <person name="Nash W."/>
            <person name="Johnson M."/>
            <person name="Thiruvilangam P."/>
            <person name="Wilson R."/>
        </authorList>
    </citation>
    <scope>NUCLEOTIDE SEQUENCE [LARGE SCALE GENOMIC DNA]</scope>
    <source>
        <strain>ATCC BAA-731 / CDC346-86 / RSK2980</strain>
    </source>
</reference>
<sequence length="385" mass="42031">MSWQQRVDDALTARRATDTLRRRYVVSQGAGRWLVANGRQYLNFSSNDYLGLSQHPQIIRAWQQAATRFGVGSGGSGHISGYSVAHQALEEELAQWLGYPRALLFISGFAANQAVITALMKKNDRIVADRLSHASLLEAANLSPAQLRRFIHNDTQHLSRLLQSPCPGQQLVVAEGIYSMDGDSAPLAEIQQITHKHHAWLLVDDAHGIGVTGVEGRGTCWLQGMKPELLVVTFGKGFGVSGAAVLCSESVANYLLQFARHLVYSTSMPPAQAQALSASLAVIRSDEGCERREKLADLVKRFRAGVNASRFTLLNAHSAIQPLVVGDNIRALRLAEALRRRGCWVSAIRPPTVPAGTARLRLTLTQSHEACDIDRLLEVLHGAGE</sequence>
<gene>
    <name evidence="1" type="primary">bioF</name>
    <name type="ordered locus">SARI_02131</name>
</gene>
<protein>
    <recommendedName>
        <fullName evidence="1">8-amino-7-oxononanoate synthase</fullName>
        <shortName evidence="1">AONS</shortName>
        <ecNumber evidence="1">2.3.1.47</ecNumber>
    </recommendedName>
    <alternativeName>
        <fullName evidence="1">7-keto-8-amino-pelargonic acid synthase</fullName>
        <shortName evidence="1">7-KAP synthase</shortName>
        <shortName evidence="1">KAPA synthase</shortName>
    </alternativeName>
    <alternativeName>
        <fullName evidence="1">8-amino-7-ketopelargonate synthase</fullName>
    </alternativeName>
</protein>
<keyword id="KW-0093">Biotin biosynthesis</keyword>
<keyword id="KW-0663">Pyridoxal phosphate</keyword>
<keyword id="KW-1185">Reference proteome</keyword>
<keyword id="KW-0808">Transferase</keyword>
<feature type="chain" id="PRO_0000381093" description="8-amino-7-oxononanoate synthase">
    <location>
        <begin position="1"/>
        <end position="385"/>
    </location>
</feature>
<feature type="binding site" evidence="1">
    <location>
        <position position="21"/>
    </location>
    <ligand>
        <name>substrate</name>
    </ligand>
</feature>
<feature type="binding site" evidence="1">
    <location>
        <begin position="108"/>
        <end position="109"/>
    </location>
    <ligand>
        <name>pyridoxal 5'-phosphate</name>
        <dbReference type="ChEBI" id="CHEBI:597326"/>
    </ligand>
</feature>
<feature type="binding site" evidence="1">
    <location>
        <position position="133"/>
    </location>
    <ligand>
        <name>substrate</name>
    </ligand>
</feature>
<feature type="binding site" evidence="1">
    <location>
        <position position="179"/>
    </location>
    <ligand>
        <name>pyridoxal 5'-phosphate</name>
        <dbReference type="ChEBI" id="CHEBI:597326"/>
    </ligand>
</feature>
<feature type="binding site" evidence="1">
    <location>
        <position position="207"/>
    </location>
    <ligand>
        <name>pyridoxal 5'-phosphate</name>
        <dbReference type="ChEBI" id="CHEBI:597326"/>
    </ligand>
</feature>
<feature type="binding site" evidence="1">
    <location>
        <position position="233"/>
    </location>
    <ligand>
        <name>pyridoxal 5'-phosphate</name>
        <dbReference type="ChEBI" id="CHEBI:597326"/>
    </ligand>
</feature>
<feature type="binding site" evidence="1">
    <location>
        <position position="352"/>
    </location>
    <ligand>
        <name>substrate</name>
    </ligand>
</feature>
<feature type="modified residue" description="N6-(pyridoxal phosphate)lysine" evidence="1">
    <location>
        <position position="236"/>
    </location>
</feature>
<evidence type="ECO:0000255" key="1">
    <source>
        <dbReference type="HAMAP-Rule" id="MF_01693"/>
    </source>
</evidence>
<proteinExistence type="inferred from homology"/>
<comment type="function">
    <text evidence="1">Catalyzes the decarboxylative condensation of pimeloyl-[acyl-carrier protein] and L-alanine to produce 8-amino-7-oxononanoate (AON), [acyl-carrier protein], and carbon dioxide.</text>
</comment>
<comment type="catalytic activity">
    <reaction evidence="1">
        <text>6-carboxyhexanoyl-[ACP] + L-alanine + H(+) = (8S)-8-amino-7-oxononanoate + holo-[ACP] + CO2</text>
        <dbReference type="Rhea" id="RHEA:42288"/>
        <dbReference type="Rhea" id="RHEA-COMP:9685"/>
        <dbReference type="Rhea" id="RHEA-COMP:9955"/>
        <dbReference type="ChEBI" id="CHEBI:15378"/>
        <dbReference type="ChEBI" id="CHEBI:16526"/>
        <dbReference type="ChEBI" id="CHEBI:57972"/>
        <dbReference type="ChEBI" id="CHEBI:64479"/>
        <dbReference type="ChEBI" id="CHEBI:78846"/>
        <dbReference type="ChEBI" id="CHEBI:149468"/>
        <dbReference type="EC" id="2.3.1.47"/>
    </reaction>
</comment>
<comment type="cofactor">
    <cofactor evidence="1">
        <name>pyridoxal 5'-phosphate</name>
        <dbReference type="ChEBI" id="CHEBI:597326"/>
    </cofactor>
</comment>
<comment type="pathway">
    <text evidence="1">Cofactor biosynthesis; biotin biosynthesis.</text>
</comment>
<comment type="subunit">
    <text evidence="1">Homodimer.</text>
</comment>
<comment type="similarity">
    <text evidence="1">Belongs to the class-II pyridoxal-phosphate-dependent aminotransferase family. BioF subfamily.</text>
</comment>
<name>BIOF_SALAR</name>
<organism>
    <name type="scientific">Salmonella arizonae (strain ATCC BAA-731 / CDC346-86 / RSK2980)</name>
    <dbReference type="NCBI Taxonomy" id="41514"/>
    <lineage>
        <taxon>Bacteria</taxon>
        <taxon>Pseudomonadati</taxon>
        <taxon>Pseudomonadota</taxon>
        <taxon>Gammaproteobacteria</taxon>
        <taxon>Enterobacterales</taxon>
        <taxon>Enterobacteriaceae</taxon>
        <taxon>Salmonella</taxon>
    </lineage>
</organism>